<feature type="chain" id="PRO_0000450455" description="YjeF N-terminal domain-containing 3">
    <location>
        <begin position="1"/>
        <end position="246"/>
    </location>
</feature>
<feature type="domain" description="YjeF N-terminal" evidence="1">
    <location>
        <begin position="24"/>
        <end position="234"/>
    </location>
</feature>
<gene>
    <name evidence="6" type="primary">yjefn3</name>
    <name evidence="4 5" type="synonym">aibp2</name>
</gene>
<keyword id="KW-0445">Lipid transport</keyword>
<keyword id="KW-1185">Reference proteome</keyword>
<keyword id="KW-0813">Transport</keyword>
<name>YJEN3_DANRE</name>
<reference key="1">
    <citation type="journal article" date="2013" name="Nature">
        <title>The zebrafish reference genome sequence and its relationship to the human genome.</title>
        <authorList>
            <person name="Howe K."/>
            <person name="Clark M.D."/>
            <person name="Torroja C.F."/>
            <person name="Torrance J."/>
            <person name="Berthelot C."/>
            <person name="Muffato M."/>
            <person name="Collins J.E."/>
            <person name="Humphray S."/>
            <person name="McLaren K."/>
            <person name="Matthews L."/>
            <person name="McLaren S."/>
            <person name="Sealy I."/>
            <person name="Caccamo M."/>
            <person name="Churcher C."/>
            <person name="Scott C."/>
            <person name="Barrett J.C."/>
            <person name="Koch R."/>
            <person name="Rauch G.J."/>
            <person name="White S."/>
            <person name="Chow W."/>
            <person name="Kilian B."/>
            <person name="Quintais L.T."/>
            <person name="Guerra-Assuncao J.A."/>
            <person name="Zhou Y."/>
            <person name="Gu Y."/>
            <person name="Yen J."/>
            <person name="Vogel J.H."/>
            <person name="Eyre T."/>
            <person name="Redmond S."/>
            <person name="Banerjee R."/>
            <person name="Chi J."/>
            <person name="Fu B."/>
            <person name="Langley E."/>
            <person name="Maguire S.F."/>
            <person name="Laird G.K."/>
            <person name="Lloyd D."/>
            <person name="Kenyon E."/>
            <person name="Donaldson S."/>
            <person name="Sehra H."/>
            <person name="Almeida-King J."/>
            <person name="Loveland J."/>
            <person name="Trevanion S."/>
            <person name="Jones M."/>
            <person name="Quail M."/>
            <person name="Willey D."/>
            <person name="Hunt A."/>
            <person name="Burton J."/>
            <person name="Sims S."/>
            <person name="McLay K."/>
            <person name="Plumb B."/>
            <person name="Davis J."/>
            <person name="Clee C."/>
            <person name="Oliver K."/>
            <person name="Clark R."/>
            <person name="Riddle C."/>
            <person name="Elliot D."/>
            <person name="Threadgold G."/>
            <person name="Harden G."/>
            <person name="Ware D."/>
            <person name="Begum S."/>
            <person name="Mortimore B."/>
            <person name="Kerry G."/>
            <person name="Heath P."/>
            <person name="Phillimore B."/>
            <person name="Tracey A."/>
            <person name="Corby N."/>
            <person name="Dunn M."/>
            <person name="Johnson C."/>
            <person name="Wood J."/>
            <person name="Clark S."/>
            <person name="Pelan S."/>
            <person name="Griffiths G."/>
            <person name="Smith M."/>
            <person name="Glithero R."/>
            <person name="Howden P."/>
            <person name="Barker N."/>
            <person name="Lloyd C."/>
            <person name="Stevens C."/>
            <person name="Harley J."/>
            <person name="Holt K."/>
            <person name="Panagiotidis G."/>
            <person name="Lovell J."/>
            <person name="Beasley H."/>
            <person name="Henderson C."/>
            <person name="Gordon D."/>
            <person name="Auger K."/>
            <person name="Wright D."/>
            <person name="Collins J."/>
            <person name="Raisen C."/>
            <person name="Dyer L."/>
            <person name="Leung K."/>
            <person name="Robertson L."/>
            <person name="Ambridge K."/>
            <person name="Leongamornlert D."/>
            <person name="McGuire S."/>
            <person name="Gilderthorp R."/>
            <person name="Griffiths C."/>
            <person name="Manthravadi D."/>
            <person name="Nichol S."/>
            <person name="Barker G."/>
            <person name="Whitehead S."/>
            <person name="Kay M."/>
            <person name="Brown J."/>
            <person name="Murnane C."/>
            <person name="Gray E."/>
            <person name="Humphries M."/>
            <person name="Sycamore N."/>
            <person name="Barker D."/>
            <person name="Saunders D."/>
            <person name="Wallis J."/>
            <person name="Babbage A."/>
            <person name="Hammond S."/>
            <person name="Mashreghi-Mohammadi M."/>
            <person name="Barr L."/>
            <person name="Martin S."/>
            <person name="Wray P."/>
            <person name="Ellington A."/>
            <person name="Matthews N."/>
            <person name="Ellwood M."/>
            <person name="Woodmansey R."/>
            <person name="Clark G."/>
            <person name="Cooper J."/>
            <person name="Tromans A."/>
            <person name="Grafham D."/>
            <person name="Skuce C."/>
            <person name="Pandian R."/>
            <person name="Andrews R."/>
            <person name="Harrison E."/>
            <person name="Kimberley A."/>
            <person name="Garnett J."/>
            <person name="Fosker N."/>
            <person name="Hall R."/>
            <person name="Garner P."/>
            <person name="Kelly D."/>
            <person name="Bird C."/>
            <person name="Palmer S."/>
            <person name="Gehring I."/>
            <person name="Berger A."/>
            <person name="Dooley C.M."/>
            <person name="Ersan-Urun Z."/>
            <person name="Eser C."/>
            <person name="Geiger H."/>
            <person name="Geisler M."/>
            <person name="Karotki L."/>
            <person name="Kirn A."/>
            <person name="Konantz J."/>
            <person name="Konantz M."/>
            <person name="Oberlander M."/>
            <person name="Rudolph-Geiger S."/>
            <person name="Teucke M."/>
            <person name="Lanz C."/>
            <person name="Raddatz G."/>
            <person name="Osoegawa K."/>
            <person name="Zhu B."/>
            <person name="Rapp A."/>
            <person name="Widaa S."/>
            <person name="Langford C."/>
            <person name="Yang F."/>
            <person name="Schuster S.C."/>
            <person name="Carter N.P."/>
            <person name="Harrow J."/>
            <person name="Ning Z."/>
            <person name="Herrero J."/>
            <person name="Searle S.M."/>
            <person name="Enright A."/>
            <person name="Geisler R."/>
            <person name="Plasterk R.H."/>
            <person name="Lee C."/>
            <person name="Westerfield M."/>
            <person name="de Jong P.J."/>
            <person name="Zon L.I."/>
            <person name="Postlethwait J.H."/>
            <person name="Nusslein-Volhard C."/>
            <person name="Hubbard T.J."/>
            <person name="Roest Crollius H."/>
            <person name="Rogers J."/>
            <person name="Stemple D.L."/>
        </authorList>
    </citation>
    <scope>NUCLEOTIDE SEQUENCE [LARGE SCALE GENOMIC DNA]</scope>
    <source>
        <strain>Tuebingen</strain>
    </source>
</reference>
<reference key="2">
    <citation type="journal article" date="2013" name="Nature">
        <title>Control of angiogenesis by AIBP-mediated cholesterol efflux.</title>
        <authorList>
            <person name="Fang L."/>
            <person name="Choi S.H."/>
            <person name="Baek J.S."/>
            <person name="Liu C."/>
            <person name="Almazan F."/>
            <person name="Ulrich F."/>
            <person name="Wiesner P."/>
            <person name="Taleb A."/>
            <person name="Deer E."/>
            <person name="Pattison J."/>
            <person name="Torres-Vazquez J."/>
            <person name="Li A.C."/>
            <person name="Miller Y.I."/>
        </authorList>
    </citation>
    <scope>FUNCTION</scope>
    <scope>DEVELOPMENTAL STAGE</scope>
    <scope>INTERACTION WITH APOA1A</scope>
    <scope>BINDS TO HDL</scope>
    <scope>DISRUPTION PHENOTYPE</scope>
</reference>
<reference key="3">
    <citation type="journal article" date="2019" name="Science">
        <title>AIBP-mediated cholesterol efflux instructs hematopoietic stem and progenitor cell fate.</title>
        <authorList>
            <person name="Gu Q."/>
            <person name="Yang X."/>
            <person name="Lv J."/>
            <person name="Zhang J."/>
            <person name="Xia B."/>
            <person name="Kim J.D."/>
            <person name="Wang R."/>
            <person name="Xiong F."/>
            <person name="Meng S."/>
            <person name="Clements T.P."/>
            <person name="Tandon B."/>
            <person name="Wagner D.S."/>
            <person name="Diaz M.F."/>
            <person name="Wenzel P.L."/>
            <person name="Miller Y.I."/>
            <person name="Traver D."/>
            <person name="Cooke J.P."/>
            <person name="Li W."/>
            <person name="Zon L.I."/>
            <person name="Chen K."/>
            <person name="Bai Y."/>
            <person name="Fang L."/>
        </authorList>
    </citation>
    <scope>FUNCTION</scope>
    <scope>DISRUPTION PHENOTYPE</scope>
</reference>
<accession>Q1LVI2</accession>
<comment type="function">
    <text evidence="2 3">Accelerates cholesterol efflux from endothelial cells to high-density lipoprotein (HDL) and thereby regulates angiogenesis (PubMed:23719382). Orchestrates hematopoietic stem and progenitor cell emergence from the hemogenic endothelium, a type of specialized endothelium manifesting hematopoietic potential. YJEFN3-mediated cholesterol efflux activates endothelial SREBF2, the master transcription factor for cholesterol biosynthesis, which in turn transactivates NOTCH and promotes hematopoietic stem and progenitor cell emergence (PubMed:30705153).</text>
</comment>
<comment type="subunit">
    <text evidence="2">Interacts with apoa1a (PubMed:23719382). Binds to high-density lipoprotein (PubMed:23719382).</text>
</comment>
<comment type="developmental stage">
    <text evidence="2">Expression in 24-36 hours post-fertilization (hpf) embryos shows a clear segmental pattern. By 48 hpf, when segmental angiogenesis is completed, is no longer expressed in somites.</text>
</comment>
<comment type="disruption phenotype">
    <text evidence="2 3">Morpholino knockdowns have a reduced number of nascent hematopoietic stem cells in the ventral dorsal aorta between 28 and 60 hours post-fertilization (hpf) (PubMed:23719382, PubMed:30705153). Morpholino knockdowns show increased levels of free (unesterified) cholesterol (PubMed:23719382, PubMed:30705153).</text>
</comment>
<organism>
    <name type="scientific">Danio rerio</name>
    <name type="common">Zebrafish</name>
    <name type="synonym">Brachydanio rerio</name>
    <dbReference type="NCBI Taxonomy" id="7955"/>
    <lineage>
        <taxon>Eukaryota</taxon>
        <taxon>Metazoa</taxon>
        <taxon>Chordata</taxon>
        <taxon>Craniata</taxon>
        <taxon>Vertebrata</taxon>
        <taxon>Euteleostomi</taxon>
        <taxon>Actinopterygii</taxon>
        <taxon>Neopterygii</taxon>
        <taxon>Teleostei</taxon>
        <taxon>Ostariophysi</taxon>
        <taxon>Cypriniformes</taxon>
        <taxon>Danionidae</taxon>
        <taxon>Danioninae</taxon>
        <taxon>Danio</taxon>
    </lineage>
</organism>
<protein>
    <recommendedName>
        <fullName>YjeF N-terminal domain-containing 3</fullName>
    </recommendedName>
    <alternativeName>
        <fullName evidence="5">ApoA-I-binding protein 2</fullName>
    </alternativeName>
</protein>
<proteinExistence type="evidence at protein level"/>
<dbReference type="EMBL" id="BX649279">
    <property type="status" value="NOT_ANNOTATED_CDS"/>
    <property type="molecule type" value="Genomic_DNA"/>
</dbReference>
<dbReference type="EMBL" id="BX664610">
    <property type="status" value="NOT_ANNOTATED_CDS"/>
    <property type="molecule type" value="Genomic_DNA"/>
</dbReference>
<dbReference type="RefSeq" id="NP_001038308.1">
    <property type="nucleotide sequence ID" value="NM_001044843.1"/>
</dbReference>
<dbReference type="SMR" id="Q1LVI2"/>
<dbReference type="FunCoup" id="Q1LVI2">
    <property type="interactions" value="224"/>
</dbReference>
<dbReference type="STRING" id="7955.ENSDARP00000082703"/>
<dbReference type="PaxDb" id="7955-ENSDARP00000082703"/>
<dbReference type="Ensembl" id="ENSDART00000088270">
    <property type="protein sequence ID" value="ENSDARP00000082703"/>
    <property type="gene ID" value="ENSDARG00000061692"/>
</dbReference>
<dbReference type="GeneID" id="557840"/>
<dbReference type="KEGG" id="dre:557840"/>
<dbReference type="AGR" id="ZFIN:ZDB-GENE-050208-755"/>
<dbReference type="CTD" id="374887"/>
<dbReference type="ZFIN" id="ZDB-GENE-050208-755">
    <property type="gene designation" value="yjefn3"/>
</dbReference>
<dbReference type="eggNOG" id="KOG2585">
    <property type="taxonomic scope" value="Eukaryota"/>
</dbReference>
<dbReference type="HOGENOM" id="CLU_024853_3_0_1"/>
<dbReference type="InParanoid" id="Q1LVI2"/>
<dbReference type="OMA" id="HSCAMAV"/>
<dbReference type="OrthoDB" id="10064708at2759"/>
<dbReference type="PhylomeDB" id="Q1LVI2"/>
<dbReference type="TreeFam" id="TF300197"/>
<dbReference type="PRO" id="PR:Q1LVI2"/>
<dbReference type="Proteomes" id="UP000000437">
    <property type="component" value="Chromosome 22"/>
</dbReference>
<dbReference type="Bgee" id="ENSDARG00000061692">
    <property type="expression patterns" value="Expressed in brain and 12 other cell types or tissues"/>
</dbReference>
<dbReference type="GO" id="GO:0005739">
    <property type="term" value="C:mitochondrion"/>
    <property type="evidence" value="ECO:0000318"/>
    <property type="project" value="GO_Central"/>
</dbReference>
<dbReference type="GO" id="GO:0052856">
    <property type="term" value="F:NAD(P)HX epimerase activity"/>
    <property type="evidence" value="ECO:0000318"/>
    <property type="project" value="GO_Central"/>
</dbReference>
<dbReference type="GO" id="GO:0071425">
    <property type="term" value="P:hematopoietic stem cell proliferation"/>
    <property type="evidence" value="ECO:0000315"/>
    <property type="project" value="UniProtKB"/>
</dbReference>
<dbReference type="GO" id="GO:0006869">
    <property type="term" value="P:lipid transport"/>
    <property type="evidence" value="ECO:0007669"/>
    <property type="project" value="UniProtKB-KW"/>
</dbReference>
<dbReference type="GO" id="GO:0031580">
    <property type="term" value="P:membrane raft distribution"/>
    <property type="evidence" value="ECO:0000315"/>
    <property type="project" value="ZFIN"/>
</dbReference>
<dbReference type="GO" id="GO:0016525">
    <property type="term" value="P:negative regulation of angiogenesis"/>
    <property type="evidence" value="ECO:0000315"/>
    <property type="project" value="ZFIN"/>
</dbReference>
<dbReference type="GO" id="GO:0010874">
    <property type="term" value="P:regulation of cholesterol efflux"/>
    <property type="evidence" value="ECO:0000315"/>
    <property type="project" value="UniProtKB"/>
</dbReference>
<dbReference type="GO" id="GO:0008593">
    <property type="term" value="P:regulation of Notch signaling pathway"/>
    <property type="evidence" value="ECO:0000315"/>
    <property type="project" value="UniProtKB"/>
</dbReference>
<dbReference type="GO" id="GO:0002040">
    <property type="term" value="P:sprouting angiogenesis"/>
    <property type="evidence" value="ECO:0000315"/>
    <property type="project" value="ZFIN"/>
</dbReference>
<dbReference type="FunFam" id="3.40.50.10260:FF:000004">
    <property type="entry name" value="yjeF N-terminal domain-containing protein 3"/>
    <property type="match status" value="1"/>
</dbReference>
<dbReference type="Gene3D" id="3.40.50.10260">
    <property type="entry name" value="YjeF N-terminal domain"/>
    <property type="match status" value="1"/>
</dbReference>
<dbReference type="InterPro" id="IPR004443">
    <property type="entry name" value="YjeF_N_dom"/>
</dbReference>
<dbReference type="InterPro" id="IPR036652">
    <property type="entry name" value="YjeF_N_dom_sf"/>
</dbReference>
<dbReference type="InterPro" id="IPR032976">
    <property type="entry name" value="YJEFN_prot_NAXE-like"/>
</dbReference>
<dbReference type="NCBIfam" id="TIGR00197">
    <property type="entry name" value="yjeF_nterm"/>
    <property type="match status" value="1"/>
</dbReference>
<dbReference type="PANTHER" id="PTHR13232">
    <property type="entry name" value="NAD(P)H-HYDRATE EPIMERASE"/>
    <property type="match status" value="1"/>
</dbReference>
<dbReference type="PANTHER" id="PTHR13232:SF12">
    <property type="entry name" value="YJEF N-TERMINAL DOMAIN-CONTAINING PROTEIN 3"/>
    <property type="match status" value="1"/>
</dbReference>
<dbReference type="Pfam" id="PF03853">
    <property type="entry name" value="YjeF_N"/>
    <property type="match status" value="1"/>
</dbReference>
<dbReference type="SUPFAM" id="SSF64153">
    <property type="entry name" value="YjeF N-terminal domain-like"/>
    <property type="match status" value="1"/>
</dbReference>
<dbReference type="PROSITE" id="PS51385">
    <property type="entry name" value="YJEF_N"/>
    <property type="match status" value="1"/>
</dbReference>
<sequence>MNHSSNEKEPETIEPLRYLSKTEVATVETELLRDYRFGQQQLIEIWGHACAIAITKAFPLSSLSKKQPTLLVVCGPEQNGSIGLVCARHLRMFEYEPTIFYPKRSTLGLHQDFTVQCEKMDIPFLSYLPTEVQLLNDAYNLVIDAILGPETDHKDVKEPYAGMLVTLKQVKIPIVSVDVPSGWDADEPAKDGINPEVLISLTAPKKCATGFSGKHFLAGRFLPYDIQKKYELNLPEFPGTECIIEL</sequence>
<evidence type="ECO:0000255" key="1">
    <source>
        <dbReference type="PROSITE-ProRule" id="PRU00719"/>
    </source>
</evidence>
<evidence type="ECO:0000269" key="2">
    <source>
    </source>
</evidence>
<evidence type="ECO:0000269" key="3">
    <source>
    </source>
</evidence>
<evidence type="ECO:0000303" key="4">
    <source>
    </source>
</evidence>
<evidence type="ECO:0000303" key="5">
    <source>
    </source>
</evidence>
<evidence type="ECO:0000312" key="6">
    <source>
        <dbReference type="ZFIN" id="ZDB-GENE-050208-755"/>
    </source>
</evidence>